<organism>
    <name type="scientific">Methanococcus maripaludis (strain C6 / ATCC BAA-1332)</name>
    <dbReference type="NCBI Taxonomy" id="444158"/>
    <lineage>
        <taxon>Archaea</taxon>
        <taxon>Methanobacteriati</taxon>
        <taxon>Methanobacteriota</taxon>
        <taxon>Methanomada group</taxon>
        <taxon>Methanococci</taxon>
        <taxon>Methanococcales</taxon>
        <taxon>Methanococcaceae</taxon>
        <taxon>Methanococcus</taxon>
    </lineage>
</organism>
<name>CBIN_METM6</name>
<protein>
    <recommendedName>
        <fullName evidence="1">Cobalt transport protein CbiN</fullName>
    </recommendedName>
    <alternativeName>
        <fullName evidence="1">Energy-coupling factor transporter probable substrate-capture protein CbiN</fullName>
        <shortName evidence="1">ECF transporter S component CbiN</shortName>
    </alternativeName>
</protein>
<gene>
    <name evidence="1" type="primary">cbiN</name>
    <name type="ordered locus">MmarC6_1192</name>
</gene>
<accession>A9A9I2</accession>
<evidence type="ECO:0000255" key="1">
    <source>
        <dbReference type="HAMAP-Rule" id="MF_00330"/>
    </source>
</evidence>
<feature type="chain" id="PRO_1000116108" description="Cobalt transport protein CbiN">
    <location>
        <begin position="1"/>
        <end position="97"/>
    </location>
</feature>
<feature type="transmembrane region" description="Helical" evidence="1">
    <location>
        <begin position="6"/>
        <end position="26"/>
    </location>
</feature>
<feature type="transmembrane region" description="Helical" evidence="1">
    <location>
        <begin position="68"/>
        <end position="88"/>
    </location>
</feature>
<comment type="function">
    <text evidence="1">Part of the energy-coupling factor (ECF) transporter complex CbiMNOQ involved in cobalt import.</text>
</comment>
<comment type="pathway">
    <text evidence="1">Cofactor biosynthesis; adenosylcobalamin biosynthesis.</text>
</comment>
<comment type="subunit">
    <text evidence="1">Forms an energy-coupling factor (ECF) transporter complex composed of an ATP-binding protein (A component, CbiO), a transmembrane protein (T component, CbiQ) and 2 possible substrate-capture proteins (S components, CbiM and CbiN) of unknown stoichimetry.</text>
</comment>
<comment type="subcellular location">
    <subcellularLocation>
        <location evidence="1">Cell membrane</location>
        <topology evidence="1">Multi-pass membrane protein</topology>
    </subcellularLocation>
</comment>
<comment type="similarity">
    <text evidence="1">Belongs to the CbiN family.</text>
</comment>
<reference key="1">
    <citation type="submission" date="2007-10" db="EMBL/GenBank/DDBJ databases">
        <title>Complete sequence of Methanococcus maripaludis C6.</title>
        <authorList>
            <consortium name="US DOE Joint Genome Institute"/>
            <person name="Copeland A."/>
            <person name="Lucas S."/>
            <person name="Lapidus A."/>
            <person name="Barry K."/>
            <person name="Glavina del Rio T."/>
            <person name="Dalin E."/>
            <person name="Tice H."/>
            <person name="Pitluck S."/>
            <person name="Clum A."/>
            <person name="Schmutz J."/>
            <person name="Larimer F."/>
            <person name="Land M."/>
            <person name="Hauser L."/>
            <person name="Kyrpides N."/>
            <person name="Mikhailova N."/>
            <person name="Sieprawska-Lupa M."/>
            <person name="Whitman W.B."/>
            <person name="Richardson P."/>
        </authorList>
    </citation>
    <scope>NUCLEOTIDE SEQUENCE [LARGE SCALE GENOMIC DNA]</scope>
    <source>
        <strain>C6 / ATCC BAA-1332</strain>
    </source>
</reference>
<keyword id="KW-1003">Cell membrane</keyword>
<keyword id="KW-0169">Cobalamin biosynthesis</keyword>
<keyword id="KW-0170">Cobalt</keyword>
<keyword id="KW-0171">Cobalt transport</keyword>
<keyword id="KW-0406">Ion transport</keyword>
<keyword id="KW-0472">Membrane</keyword>
<keyword id="KW-0812">Transmembrane</keyword>
<keyword id="KW-1133">Transmembrane helix</keyword>
<keyword id="KW-0813">Transport</keyword>
<dbReference type="EMBL" id="CP000867">
    <property type="protein sequence ID" value="ABX02005.1"/>
    <property type="molecule type" value="Genomic_DNA"/>
</dbReference>
<dbReference type="STRING" id="444158.MmarC6_1192"/>
<dbReference type="KEGG" id="mmx:MmarC6_1192"/>
<dbReference type="eggNOG" id="arCOG04384">
    <property type="taxonomic scope" value="Archaea"/>
</dbReference>
<dbReference type="HOGENOM" id="CLU_136197_2_0_2"/>
<dbReference type="OrthoDB" id="187156at2157"/>
<dbReference type="PhylomeDB" id="A9A9I2"/>
<dbReference type="UniPathway" id="UPA00148"/>
<dbReference type="GO" id="GO:0005886">
    <property type="term" value="C:plasma membrane"/>
    <property type="evidence" value="ECO:0007669"/>
    <property type="project" value="UniProtKB-SubCell"/>
</dbReference>
<dbReference type="GO" id="GO:0015087">
    <property type="term" value="F:cobalt ion transmembrane transporter activity"/>
    <property type="evidence" value="ECO:0007669"/>
    <property type="project" value="UniProtKB-UniRule"/>
</dbReference>
<dbReference type="GO" id="GO:0009236">
    <property type="term" value="P:cobalamin biosynthetic process"/>
    <property type="evidence" value="ECO:0007669"/>
    <property type="project" value="UniProtKB-UniRule"/>
</dbReference>
<dbReference type="HAMAP" id="MF_00330">
    <property type="entry name" value="CbiN"/>
    <property type="match status" value="1"/>
</dbReference>
<dbReference type="InterPro" id="IPR003705">
    <property type="entry name" value="CbiN"/>
</dbReference>
<dbReference type="NCBIfam" id="TIGR01165">
    <property type="entry name" value="cbiN"/>
    <property type="match status" value="1"/>
</dbReference>
<dbReference type="NCBIfam" id="NF002780">
    <property type="entry name" value="PRK02898.1"/>
    <property type="match status" value="1"/>
</dbReference>
<dbReference type="PANTHER" id="PTHR38662">
    <property type="entry name" value="COBALT TRANSPORT PROTEIN CBIN"/>
    <property type="match status" value="1"/>
</dbReference>
<dbReference type="PANTHER" id="PTHR38662:SF1">
    <property type="entry name" value="COBALT TRANSPORT PROTEIN CBIN"/>
    <property type="match status" value="1"/>
</dbReference>
<dbReference type="Pfam" id="PF02553">
    <property type="entry name" value="CbiN"/>
    <property type="match status" value="1"/>
</dbReference>
<sequence length="97" mass="10731">MEFKHVLMILGVIILTLAPLIMYSGLGEDEGYFGGADGAAGDLIMEISPNYEPWFEPFWEPPSGEIESLLFALQAAIGAMIIGYFFGYNKAKYDDKN</sequence>
<proteinExistence type="inferred from homology"/>